<organism>
    <name type="scientific">Leptospira interrogans serogroup Icterohaemorrhagiae serovar Lai (strain 56601)</name>
    <dbReference type="NCBI Taxonomy" id="189518"/>
    <lineage>
        <taxon>Bacteria</taxon>
        <taxon>Pseudomonadati</taxon>
        <taxon>Spirochaetota</taxon>
        <taxon>Spirochaetia</taxon>
        <taxon>Leptospirales</taxon>
        <taxon>Leptospiraceae</taxon>
        <taxon>Leptospira</taxon>
    </lineage>
</organism>
<accession>Q8F312</accession>
<dbReference type="EMBL" id="AE010300">
    <property type="protein sequence ID" value="AAN49798.1"/>
    <property type="molecule type" value="Genomic_DNA"/>
</dbReference>
<dbReference type="RefSeq" id="NP_712780.1">
    <property type="nucleotide sequence ID" value="NC_004342.2"/>
</dbReference>
<dbReference type="RefSeq" id="WP_000077420.1">
    <property type="nucleotide sequence ID" value="NC_004342.2"/>
</dbReference>
<dbReference type="SMR" id="Q8F312"/>
<dbReference type="STRING" id="189518.LA_2599"/>
<dbReference type="PaxDb" id="189518-LA_2599"/>
<dbReference type="EnsemblBacteria" id="AAN49798">
    <property type="protein sequence ID" value="AAN49798"/>
    <property type="gene ID" value="LA_2599"/>
</dbReference>
<dbReference type="KEGG" id="lil:LA_2599"/>
<dbReference type="PATRIC" id="fig|189518.3.peg.2584"/>
<dbReference type="HOGENOM" id="CLU_165326_0_0_12"/>
<dbReference type="InParanoid" id="Q8F312"/>
<dbReference type="OrthoDB" id="5432174at2"/>
<dbReference type="PRO" id="PR:Q8F312"/>
<dbReference type="Proteomes" id="UP000001408">
    <property type="component" value="Chromosome I"/>
</dbReference>
<dbReference type="HAMAP" id="MF_01503">
    <property type="entry name" value="RemA"/>
    <property type="match status" value="1"/>
</dbReference>
<dbReference type="InterPro" id="IPR007169">
    <property type="entry name" value="RemA-like"/>
</dbReference>
<dbReference type="NCBIfam" id="NF003315">
    <property type="entry name" value="PRK04323.1"/>
    <property type="match status" value="1"/>
</dbReference>
<dbReference type="PANTHER" id="PTHR38449:SF1">
    <property type="entry name" value="REGULATORY PROTEIN SSL2874-RELATED"/>
    <property type="match status" value="1"/>
</dbReference>
<dbReference type="PANTHER" id="PTHR38449">
    <property type="entry name" value="REGULATORY PROTEIN TM_1690-RELATED"/>
    <property type="match status" value="1"/>
</dbReference>
<dbReference type="Pfam" id="PF04025">
    <property type="entry name" value="RemA-like"/>
    <property type="match status" value="1"/>
</dbReference>
<proteinExistence type="inferred from homology"/>
<sequence>MSQFSVLNVGFGNIVLVSKIVSIIHSDSASAKRIRNEAKSNNSLIDATQGKKTRSIIVTDSNHLILSNLRVESLTKRIESRDNSIASEEEDLD</sequence>
<feature type="chain" id="PRO_0000050232" description="Putative regulatory protein LA_2599">
    <location>
        <begin position="1"/>
        <end position="93"/>
    </location>
</feature>
<name>Y2599_LEPIN</name>
<gene>
    <name type="ordered locus">LA_2599</name>
</gene>
<reference key="1">
    <citation type="journal article" date="2003" name="Nature">
        <title>Unique physiological and pathogenic features of Leptospira interrogans revealed by whole-genome sequencing.</title>
        <authorList>
            <person name="Ren S.-X."/>
            <person name="Fu G."/>
            <person name="Jiang X.-G."/>
            <person name="Zeng R."/>
            <person name="Miao Y.-G."/>
            <person name="Xu H."/>
            <person name="Zhang Y.-X."/>
            <person name="Xiong H."/>
            <person name="Lu G."/>
            <person name="Lu L.-F."/>
            <person name="Jiang H.-Q."/>
            <person name="Jia J."/>
            <person name="Tu Y.-F."/>
            <person name="Jiang J.-X."/>
            <person name="Gu W.-Y."/>
            <person name="Zhang Y.-Q."/>
            <person name="Cai Z."/>
            <person name="Sheng H.-H."/>
            <person name="Yin H.-F."/>
            <person name="Zhang Y."/>
            <person name="Zhu G.-F."/>
            <person name="Wan M."/>
            <person name="Huang H.-L."/>
            <person name="Qian Z."/>
            <person name="Wang S.-Y."/>
            <person name="Ma W."/>
            <person name="Yao Z.-J."/>
            <person name="Shen Y."/>
            <person name="Qiang B.-Q."/>
            <person name="Xia Q.-C."/>
            <person name="Guo X.-K."/>
            <person name="Danchin A."/>
            <person name="Saint Girons I."/>
            <person name="Somerville R.L."/>
            <person name="Wen Y.-M."/>
            <person name="Shi M.-H."/>
            <person name="Chen Z."/>
            <person name="Xu J.-G."/>
            <person name="Zhao G.-P."/>
        </authorList>
    </citation>
    <scope>NUCLEOTIDE SEQUENCE [LARGE SCALE GENOMIC DNA]</scope>
    <source>
        <strain>56601</strain>
    </source>
</reference>
<comment type="similarity">
    <text evidence="1">Belongs to the RemA family.</text>
</comment>
<evidence type="ECO:0000255" key="1">
    <source>
        <dbReference type="HAMAP-Rule" id="MF_01503"/>
    </source>
</evidence>
<keyword id="KW-1185">Reference proteome</keyword>
<protein>
    <recommendedName>
        <fullName evidence="1">Putative regulatory protein LA_2599</fullName>
    </recommendedName>
</protein>